<comment type="subcellular location">
    <subcellularLocation>
        <location evidence="1">Cytoplasm</location>
        <location evidence="1">Nucleoid</location>
    </subcellularLocation>
</comment>
<comment type="similarity">
    <text evidence="1">Belongs to the YejK family.</text>
</comment>
<sequence length="335" mass="38000">MSLDIAQIALHQLIKRDEQTLEMVLRDSLLSTNAAVEEMMAELHRVYSAKSKAYGLFNEQSELADALRACRKGDEDFLSFSRAATGRLRDELAKYPFAEGGIVLFCQYRYLAVDYLLISVLNSCNSMRVNEQLDISTTHYLDINHADIVARIDLTEWETNPESTRYLTFLKGRVGRKVSDFFMDFLAASEGLDTKAQNRGLLKAVDEYCDEAQLDKNERQNYRQQVYSYCNEQLQSGEEIELASLSQELPPLGEKTFQQFSTEQGYELEESFPADRGTLRQLTKFAGSGGGISLNFDALLLGERIFWDPATDTLTIKGTPPNLRDQLQRRTSSSK</sequence>
<gene>
    <name type="ordered locus">PC1_1634</name>
</gene>
<proteinExistence type="inferred from homology"/>
<organism>
    <name type="scientific">Pectobacterium carotovorum subsp. carotovorum (strain PC1)</name>
    <dbReference type="NCBI Taxonomy" id="561230"/>
    <lineage>
        <taxon>Bacteria</taxon>
        <taxon>Pseudomonadati</taxon>
        <taxon>Pseudomonadota</taxon>
        <taxon>Gammaproteobacteria</taxon>
        <taxon>Enterobacterales</taxon>
        <taxon>Pectobacteriaceae</taxon>
        <taxon>Pectobacterium</taxon>
    </lineage>
</organism>
<reference key="1">
    <citation type="submission" date="2009-07" db="EMBL/GenBank/DDBJ databases">
        <title>Complete sequence of Pectobacterium carotovorum subsp. carotovorum PC1.</title>
        <authorList>
            <consortium name="US DOE Joint Genome Institute"/>
            <person name="Lucas S."/>
            <person name="Copeland A."/>
            <person name="Lapidus A."/>
            <person name="Glavina del Rio T."/>
            <person name="Tice H."/>
            <person name="Bruce D."/>
            <person name="Goodwin L."/>
            <person name="Pitluck S."/>
            <person name="Munk A.C."/>
            <person name="Brettin T."/>
            <person name="Detter J.C."/>
            <person name="Han C."/>
            <person name="Tapia R."/>
            <person name="Larimer F."/>
            <person name="Land M."/>
            <person name="Hauser L."/>
            <person name="Kyrpides N."/>
            <person name="Mikhailova N."/>
            <person name="Balakrishnan V."/>
            <person name="Glasner J."/>
            <person name="Perna N.T."/>
        </authorList>
    </citation>
    <scope>NUCLEOTIDE SEQUENCE [LARGE SCALE GENOMIC DNA]</scope>
    <source>
        <strain>PC1</strain>
    </source>
</reference>
<evidence type="ECO:0000255" key="1">
    <source>
        <dbReference type="HAMAP-Rule" id="MF_00730"/>
    </source>
</evidence>
<feature type="chain" id="PRO_1000212734" description="Nucleoid-associated protein PC1_1634">
    <location>
        <begin position="1"/>
        <end position="335"/>
    </location>
</feature>
<name>NDPA_PECCP</name>
<accession>C6DEJ0</accession>
<protein>
    <recommendedName>
        <fullName evidence="1">Nucleoid-associated protein PC1_1634</fullName>
    </recommendedName>
</protein>
<dbReference type="EMBL" id="CP001657">
    <property type="protein sequence ID" value="ACT12675.1"/>
    <property type="molecule type" value="Genomic_DNA"/>
</dbReference>
<dbReference type="SMR" id="C6DEJ0"/>
<dbReference type="STRING" id="561230.PC1_1634"/>
<dbReference type="KEGG" id="pct:PC1_1634"/>
<dbReference type="eggNOG" id="COG3081">
    <property type="taxonomic scope" value="Bacteria"/>
</dbReference>
<dbReference type="HOGENOM" id="CLU_063050_0_1_6"/>
<dbReference type="OrthoDB" id="9131762at2"/>
<dbReference type="Proteomes" id="UP000002736">
    <property type="component" value="Chromosome"/>
</dbReference>
<dbReference type="GO" id="GO:0043590">
    <property type="term" value="C:bacterial nucleoid"/>
    <property type="evidence" value="ECO:0007669"/>
    <property type="project" value="TreeGrafter"/>
</dbReference>
<dbReference type="GO" id="GO:0005737">
    <property type="term" value="C:cytoplasm"/>
    <property type="evidence" value="ECO:0007669"/>
    <property type="project" value="UniProtKB-UniRule"/>
</dbReference>
<dbReference type="GO" id="GO:0003690">
    <property type="term" value="F:double-stranded DNA binding"/>
    <property type="evidence" value="ECO:0007669"/>
    <property type="project" value="TreeGrafter"/>
</dbReference>
<dbReference type="GO" id="GO:0003727">
    <property type="term" value="F:single-stranded RNA binding"/>
    <property type="evidence" value="ECO:0007669"/>
    <property type="project" value="TreeGrafter"/>
</dbReference>
<dbReference type="HAMAP" id="MF_00730">
    <property type="entry name" value="NdpA"/>
    <property type="match status" value="1"/>
</dbReference>
<dbReference type="InterPro" id="IPR007358">
    <property type="entry name" value="Nucleoid_associated_NdpA"/>
</dbReference>
<dbReference type="NCBIfam" id="NF001557">
    <property type="entry name" value="PRK00378.1"/>
    <property type="match status" value="1"/>
</dbReference>
<dbReference type="PANTHER" id="PTHR38772">
    <property type="match status" value="1"/>
</dbReference>
<dbReference type="PANTHER" id="PTHR38772:SF1">
    <property type="entry name" value="NUCLEOID-ASSOCIATED PROTEIN YEJK"/>
    <property type="match status" value="1"/>
</dbReference>
<dbReference type="Pfam" id="PF04245">
    <property type="entry name" value="NA37"/>
    <property type="match status" value="1"/>
</dbReference>
<keyword id="KW-0963">Cytoplasm</keyword>